<evidence type="ECO:0000255" key="1">
    <source>
        <dbReference type="HAMAP-Rule" id="MF_00818"/>
    </source>
</evidence>
<sequence length="129" mass="14698">MTQTPLYGERAIAEAELICFDNPRPGRPYEVSIELPEFTCKCPFSGYPDFAVLRMIYQPGPRVVELKAIKLYVNSYRDQSISHEEVTNRILDDLVAATDPVWMQLEADFNPRGNVHTVVRVSHGTRQPC</sequence>
<protein>
    <recommendedName>
        <fullName evidence="1">NADPH-dependent 7-cyano-7-deazaguanine reductase</fullName>
        <ecNumber evidence="1">1.7.1.13</ecNumber>
    </recommendedName>
    <alternativeName>
        <fullName evidence="1">7-cyano-7-carbaguanine reductase</fullName>
    </alternativeName>
    <alternativeName>
        <fullName evidence="1">NADPH-dependent nitrile oxidoreductase</fullName>
    </alternativeName>
    <alternativeName>
        <fullName evidence="1">PreQ(0) reductase</fullName>
    </alternativeName>
</protein>
<feature type="chain" id="PRO_0000247697" description="NADPH-dependent 7-cyano-7-deazaguanine reductase">
    <location>
        <begin position="1"/>
        <end position="129"/>
    </location>
</feature>
<feature type="active site" description="Thioimide intermediate" evidence="1">
    <location>
        <position position="42"/>
    </location>
</feature>
<feature type="active site" description="Proton donor" evidence="1">
    <location>
        <position position="49"/>
    </location>
</feature>
<feature type="binding site" evidence="1">
    <location>
        <begin position="64"/>
        <end position="66"/>
    </location>
    <ligand>
        <name>substrate</name>
    </ligand>
</feature>
<feature type="binding site" evidence="1">
    <location>
        <begin position="83"/>
        <end position="84"/>
    </location>
    <ligand>
        <name>substrate</name>
    </ligand>
</feature>
<keyword id="KW-0963">Cytoplasm</keyword>
<keyword id="KW-0521">NADP</keyword>
<keyword id="KW-0560">Oxidoreductase</keyword>
<keyword id="KW-0671">Queuosine biosynthesis</keyword>
<proteinExistence type="inferred from homology"/>
<accession>Q3AHI8</accession>
<reference key="1">
    <citation type="submission" date="2005-07" db="EMBL/GenBank/DDBJ databases">
        <title>Complete sequence of Synechococcus sp. CC9605.</title>
        <authorList>
            <consortium name="US DOE Joint Genome Institute"/>
            <person name="Copeland A."/>
            <person name="Lucas S."/>
            <person name="Lapidus A."/>
            <person name="Barry K."/>
            <person name="Detter J.C."/>
            <person name="Glavina T."/>
            <person name="Hammon N."/>
            <person name="Israni S."/>
            <person name="Pitluck S."/>
            <person name="Schmutz J."/>
            <person name="Martinez M."/>
            <person name="Larimer F."/>
            <person name="Land M."/>
            <person name="Kyrpides N."/>
            <person name="Ivanova N."/>
            <person name="Richardson P."/>
        </authorList>
    </citation>
    <scope>NUCLEOTIDE SEQUENCE [LARGE SCALE GENOMIC DNA]</scope>
    <source>
        <strain>CC9605</strain>
    </source>
</reference>
<comment type="function">
    <text evidence="1">Catalyzes the NADPH-dependent reduction of 7-cyano-7-deazaguanine (preQ0) to 7-aminomethyl-7-deazaguanine (preQ1).</text>
</comment>
<comment type="catalytic activity">
    <reaction evidence="1">
        <text>7-aminomethyl-7-carbaguanine + 2 NADP(+) = 7-cyano-7-deazaguanine + 2 NADPH + 3 H(+)</text>
        <dbReference type="Rhea" id="RHEA:13409"/>
        <dbReference type="ChEBI" id="CHEBI:15378"/>
        <dbReference type="ChEBI" id="CHEBI:45075"/>
        <dbReference type="ChEBI" id="CHEBI:57783"/>
        <dbReference type="ChEBI" id="CHEBI:58349"/>
        <dbReference type="ChEBI" id="CHEBI:58703"/>
        <dbReference type="EC" id="1.7.1.13"/>
    </reaction>
</comment>
<comment type="pathway">
    <text evidence="1">tRNA modification; tRNA-queuosine biosynthesis.</text>
</comment>
<comment type="subcellular location">
    <subcellularLocation>
        <location evidence="1">Cytoplasm</location>
    </subcellularLocation>
</comment>
<comment type="similarity">
    <text evidence="1">Belongs to the GTP cyclohydrolase I family. QueF type 1 subfamily.</text>
</comment>
<dbReference type="EC" id="1.7.1.13" evidence="1"/>
<dbReference type="EMBL" id="CP000110">
    <property type="protein sequence ID" value="ABB35944.1"/>
    <property type="molecule type" value="Genomic_DNA"/>
</dbReference>
<dbReference type="RefSeq" id="WP_011365144.1">
    <property type="nucleotide sequence ID" value="NC_007516.1"/>
</dbReference>
<dbReference type="SMR" id="Q3AHI8"/>
<dbReference type="STRING" id="110662.Syncc9605_2205"/>
<dbReference type="KEGG" id="syd:Syncc9605_2205"/>
<dbReference type="eggNOG" id="COG0780">
    <property type="taxonomic scope" value="Bacteria"/>
</dbReference>
<dbReference type="HOGENOM" id="CLU_102489_1_1_3"/>
<dbReference type="OrthoDB" id="9795077at2"/>
<dbReference type="UniPathway" id="UPA00392"/>
<dbReference type="GO" id="GO:0005737">
    <property type="term" value="C:cytoplasm"/>
    <property type="evidence" value="ECO:0007669"/>
    <property type="project" value="UniProtKB-SubCell"/>
</dbReference>
<dbReference type="GO" id="GO:0033739">
    <property type="term" value="F:preQ1 synthase activity"/>
    <property type="evidence" value="ECO:0007669"/>
    <property type="project" value="UniProtKB-UniRule"/>
</dbReference>
<dbReference type="GO" id="GO:0008616">
    <property type="term" value="P:queuosine biosynthetic process"/>
    <property type="evidence" value="ECO:0007669"/>
    <property type="project" value="UniProtKB-UniRule"/>
</dbReference>
<dbReference type="GO" id="GO:0006400">
    <property type="term" value="P:tRNA modification"/>
    <property type="evidence" value="ECO:0007669"/>
    <property type="project" value="UniProtKB-UniRule"/>
</dbReference>
<dbReference type="Gene3D" id="3.30.1130.10">
    <property type="match status" value="1"/>
</dbReference>
<dbReference type="HAMAP" id="MF_00818">
    <property type="entry name" value="QueF_type1"/>
    <property type="match status" value="1"/>
</dbReference>
<dbReference type="InterPro" id="IPR043133">
    <property type="entry name" value="GTP-CH-I_C/QueF"/>
</dbReference>
<dbReference type="InterPro" id="IPR050084">
    <property type="entry name" value="NADPH_dep_7-cyano-7-deazaG_red"/>
</dbReference>
<dbReference type="InterPro" id="IPR029500">
    <property type="entry name" value="QueF"/>
</dbReference>
<dbReference type="InterPro" id="IPR016856">
    <property type="entry name" value="QueF_type1"/>
</dbReference>
<dbReference type="NCBIfam" id="TIGR03139">
    <property type="entry name" value="QueF-II"/>
    <property type="match status" value="1"/>
</dbReference>
<dbReference type="PANTHER" id="PTHR34354">
    <property type="entry name" value="NADPH-DEPENDENT 7-CYANO-7-DEAZAGUANINE REDUCTASE"/>
    <property type="match status" value="1"/>
</dbReference>
<dbReference type="PANTHER" id="PTHR34354:SF1">
    <property type="entry name" value="NADPH-DEPENDENT 7-CYANO-7-DEAZAGUANINE REDUCTASE"/>
    <property type="match status" value="1"/>
</dbReference>
<dbReference type="Pfam" id="PF14489">
    <property type="entry name" value="QueF"/>
    <property type="match status" value="1"/>
</dbReference>
<dbReference type="PIRSF" id="PIRSF027377">
    <property type="entry name" value="Nitrile_oxidored_QueF"/>
    <property type="match status" value="1"/>
</dbReference>
<dbReference type="SUPFAM" id="SSF55620">
    <property type="entry name" value="Tetrahydrobiopterin biosynthesis enzymes-like"/>
    <property type="match status" value="1"/>
</dbReference>
<organism>
    <name type="scientific">Synechococcus sp. (strain CC9605)</name>
    <dbReference type="NCBI Taxonomy" id="110662"/>
    <lineage>
        <taxon>Bacteria</taxon>
        <taxon>Bacillati</taxon>
        <taxon>Cyanobacteriota</taxon>
        <taxon>Cyanophyceae</taxon>
        <taxon>Synechococcales</taxon>
        <taxon>Synechococcaceae</taxon>
        <taxon>Synechococcus</taxon>
    </lineage>
</organism>
<name>QUEF_SYNSC</name>
<gene>
    <name evidence="1" type="primary">queF</name>
    <name type="ordered locus">Syncc9605_2205</name>
</gene>